<name>BEXB1_HAEIF</name>
<accession>P19390</accession>
<gene>
    <name type="primary">bexB</name>
</gene>
<feature type="chain" id="PRO_0000182976" description="Capsule polysaccharide export inner-membrane protein BexB">
    <location>
        <begin position="1"/>
        <end position="265"/>
    </location>
</feature>
<feature type="transmembrane region" description="Helical" evidence="1">
    <location>
        <begin position="37"/>
        <end position="57"/>
    </location>
</feature>
<feature type="transmembrane region" description="Helical" evidence="1">
    <location>
        <begin position="64"/>
        <end position="84"/>
    </location>
</feature>
<feature type="transmembrane region" description="Helical" evidence="1">
    <location>
        <begin position="118"/>
        <end position="138"/>
    </location>
</feature>
<feature type="transmembrane region" description="Helical" evidence="1">
    <location>
        <begin position="151"/>
        <end position="171"/>
    </location>
</feature>
<feature type="transmembrane region" description="Helical" evidence="1">
    <location>
        <begin position="178"/>
        <end position="198"/>
    </location>
</feature>
<feature type="transmembrane region" description="Helical" evidence="1">
    <location>
        <begin position="235"/>
        <end position="255"/>
    </location>
</feature>
<feature type="domain" description="ABC transmembrane type-2" evidence="2">
    <location>
        <begin position="37"/>
        <end position="258"/>
    </location>
</feature>
<dbReference type="EMBL" id="M33787">
    <property type="protein sequence ID" value="AAA24945.1"/>
    <property type="molecule type" value="Genomic_DNA"/>
</dbReference>
<dbReference type="RefSeq" id="WP_015702019.1">
    <property type="nucleotide sequence ID" value="NZ_VOFX01000001.1"/>
</dbReference>
<dbReference type="SMR" id="P19390"/>
<dbReference type="GO" id="GO:0043190">
    <property type="term" value="C:ATP-binding cassette (ABC) transporter complex"/>
    <property type="evidence" value="ECO:0007669"/>
    <property type="project" value="InterPro"/>
</dbReference>
<dbReference type="GO" id="GO:0140359">
    <property type="term" value="F:ABC-type transporter activity"/>
    <property type="evidence" value="ECO:0007669"/>
    <property type="project" value="InterPro"/>
</dbReference>
<dbReference type="GO" id="GO:0015920">
    <property type="term" value="P:lipopolysaccharide transport"/>
    <property type="evidence" value="ECO:0007669"/>
    <property type="project" value="TreeGrafter"/>
</dbReference>
<dbReference type="GO" id="GO:0015774">
    <property type="term" value="P:polysaccharide transport"/>
    <property type="evidence" value="ECO:0007669"/>
    <property type="project" value="UniProtKB-KW"/>
</dbReference>
<dbReference type="InterPro" id="IPR013525">
    <property type="entry name" value="ABC2_TM"/>
</dbReference>
<dbReference type="InterPro" id="IPR047817">
    <property type="entry name" value="ABC2_TM_bact-type"/>
</dbReference>
<dbReference type="InterPro" id="IPR000412">
    <property type="entry name" value="ABC_2_transport"/>
</dbReference>
<dbReference type="PANTHER" id="PTHR30413:SF10">
    <property type="entry name" value="CAPSULE POLYSACCHARIDE EXPORT INNER-MEMBRANE PROTEIN CTRC"/>
    <property type="match status" value="1"/>
</dbReference>
<dbReference type="PANTHER" id="PTHR30413">
    <property type="entry name" value="INNER MEMBRANE TRANSPORT PERMEASE"/>
    <property type="match status" value="1"/>
</dbReference>
<dbReference type="Pfam" id="PF01061">
    <property type="entry name" value="ABC2_membrane"/>
    <property type="match status" value="1"/>
</dbReference>
<dbReference type="PRINTS" id="PR00164">
    <property type="entry name" value="ABC2TRNSPORT"/>
</dbReference>
<dbReference type="PROSITE" id="PS51012">
    <property type="entry name" value="ABC_TM2"/>
    <property type="match status" value="1"/>
</dbReference>
<sequence>MQYGDKTTFKQSLAIQGRVINALLMREIITRYGRQNIGFFWLFVEPLLMTFFIVMMWKFIRADKFSTLNMIAFVMTGYPMAMMWRNASNRAIGSISANLSLLYHRNVRVLDTIFTRVLLEVAGASIAQILFMAILVMIDWIDAPHDVFYMLIAWFLMAMFAFGLGLIICAIAQQFDVFGKIWGTLSFVLLPISGAFFFVHNLPAQAQSIALWFPMIHGTEMFRHGYFGDTVVTYESIGFLVVSDLALLLLGLVMVKNFSKGVEPQ</sequence>
<reference key="1">
    <citation type="journal article" date="1990" name="J. Bacteriol.">
        <title>Capsulation in distantly related strains of Haemophilus influenzae type b: genetic drift and gene transfer at the capsulation locus.</title>
        <authorList>
            <person name="Kroll J.S."/>
            <person name="Moxon E.R."/>
        </authorList>
    </citation>
    <scope>NUCLEOTIDE SEQUENCE [GENOMIC DNA]</scope>
    <source>
        <strain>RM 153 / Serotype B</strain>
    </source>
</reference>
<evidence type="ECO:0000255" key="1"/>
<evidence type="ECO:0000255" key="2">
    <source>
        <dbReference type="PROSITE-ProRule" id="PRU00442"/>
    </source>
</evidence>
<evidence type="ECO:0000305" key="3"/>
<protein>
    <recommendedName>
        <fullName>Capsule polysaccharide export inner-membrane protein BexB</fullName>
    </recommendedName>
</protein>
<proteinExistence type="inferred from homology"/>
<keyword id="KW-0972">Capsule biogenesis/degradation</keyword>
<keyword id="KW-0997">Cell inner membrane</keyword>
<keyword id="KW-1003">Cell membrane</keyword>
<keyword id="KW-0472">Membrane</keyword>
<keyword id="KW-0625">Polysaccharide transport</keyword>
<keyword id="KW-0762">Sugar transport</keyword>
<keyword id="KW-0812">Transmembrane</keyword>
<keyword id="KW-1133">Transmembrane helix</keyword>
<keyword id="KW-0813">Transport</keyword>
<organism>
    <name type="scientific">Haemophilus influenzae</name>
    <dbReference type="NCBI Taxonomy" id="727"/>
    <lineage>
        <taxon>Bacteria</taxon>
        <taxon>Pseudomonadati</taxon>
        <taxon>Pseudomonadota</taxon>
        <taxon>Gammaproteobacteria</taxon>
        <taxon>Pasteurellales</taxon>
        <taxon>Pasteurellaceae</taxon>
        <taxon>Haemophilus</taxon>
    </lineage>
</organism>
<comment type="function">
    <text>May form an ATP-driven capsule polysaccharide export apparatus, in association with the BexA, BexC and BexD proteins.</text>
</comment>
<comment type="subcellular location">
    <subcellularLocation>
        <location evidence="3">Cell inner membrane</location>
        <topology evidence="3">Multi-pass membrane protein</topology>
    </subcellularLocation>
</comment>
<comment type="similarity">
    <text evidence="3">Belongs to the ABC-2 integral membrane protein family.</text>
</comment>